<keyword id="KW-0002">3D-structure</keyword>
<keyword id="KW-0010">Activator</keyword>
<keyword id="KW-0025">Alternative splicing</keyword>
<keyword id="KW-0963">Cytoplasm</keyword>
<keyword id="KW-0238">DNA-binding</keyword>
<keyword id="KW-0539">Nucleus</keyword>
<keyword id="KW-1267">Proteomics identification</keyword>
<keyword id="KW-1185">Reference proteome</keyword>
<keyword id="KW-0678">Repressor</keyword>
<keyword id="KW-0804">Transcription</keyword>
<keyword id="KW-0805">Transcription regulation</keyword>
<evidence type="ECO:0000250" key="1">
    <source>
        <dbReference type="UniProtKB" id="Q8CGW4"/>
    </source>
</evidence>
<evidence type="ECO:0000255" key="2">
    <source>
        <dbReference type="PROSITE-ProRule" id="PRU00267"/>
    </source>
</evidence>
<evidence type="ECO:0000256" key="3">
    <source>
        <dbReference type="SAM" id="MobiDB-lite"/>
    </source>
</evidence>
<evidence type="ECO:0000269" key="4">
    <source>
    </source>
</evidence>
<evidence type="ECO:0000269" key="5">
    <source>
    </source>
</evidence>
<evidence type="ECO:0000269" key="6">
    <source>
    </source>
</evidence>
<evidence type="ECO:0000303" key="7">
    <source>
    </source>
</evidence>
<evidence type="ECO:0007829" key="8">
    <source>
        <dbReference type="PDB" id="7JJK"/>
    </source>
</evidence>
<name>SOX30_HUMAN</name>
<comment type="function">
    <text evidence="1 4 6">Acts both as a transcriptional activator and a repressor (PubMed:10359848, PubMed:29739711). Binds to the DNA sequence 5'-ACAAT-3' and shows a preference for guanine residues surrounding this core motif (PubMed:10359848). Binds to its own promoter and activates its own transcription (By similarity). Required to activate the expression of postmeiotic genes involved in spermiogenesis (By similarity). Binds to the promoter region of CTNNB1 and represses its transcription which leads to inhibition of Wnt signaling (PubMed:29739711). Also inhibits Wnt signaling by binding to the CTNNB1 protein, preventing interaction of CTNNB1 with TCF7L2/TCF4 (PubMed:29739711).</text>
</comment>
<comment type="subunit">
    <text evidence="6">Interacts with CTNNB1, competitively inhibiting CTNNB1-TCF7L2/TCF4 interaction.</text>
</comment>
<comment type="interaction">
    <interactant intactId="EBI-742973">
        <id>O94993</id>
    </interactant>
    <interactant intactId="EBI-2371423">
        <id>O43865</id>
        <label>AHCYL1</label>
    </interactant>
    <organismsDiffer>false</organismsDiffer>
    <experiments>3</experiments>
</comment>
<comment type="interaction">
    <interactant intactId="EBI-742973">
        <id>O94993</id>
    </interactant>
    <interactant intactId="EBI-749051">
        <id>Q8IYR0</id>
        <label>CFAP206</label>
    </interactant>
    <organismsDiffer>false</organismsDiffer>
    <experiments>4</experiments>
</comment>
<comment type="interaction">
    <interactant intactId="EBI-742973">
        <id>O94993</id>
    </interactant>
    <interactant intactId="EBI-701903">
        <id>Q14192</id>
        <label>FHL2</label>
    </interactant>
    <organismsDiffer>false</organismsDiffer>
    <experiments>3</experiments>
</comment>
<comment type="interaction">
    <interactant intactId="EBI-742973">
        <id>O94993</id>
    </interactant>
    <interactant intactId="EBI-2271018">
        <id>Q01543</id>
        <label>FLI1</label>
    </interactant>
    <organismsDiffer>false</organismsDiffer>
    <experiments>3</experiments>
</comment>
<comment type="subcellular location">
    <subcellularLocation>
        <location evidence="4 6">Nucleus</location>
    </subcellularLocation>
    <subcellularLocation>
        <location evidence="6">Cytoplasm</location>
    </subcellularLocation>
    <text evidence="1">Enriched at the chromocenter.</text>
</comment>
<comment type="alternative products">
    <event type="alternative splicing"/>
    <isoform>
        <id>O94993-1</id>
        <name>1</name>
        <sequence type="displayed"/>
    </isoform>
    <isoform>
        <id>O94993-2</id>
        <name>2</name>
        <sequence type="described" ref="VSP_002205 VSP_002206"/>
    </isoform>
</comment>
<reference key="1">
    <citation type="journal article" date="1999" name="Nucleic Acids Res.">
        <title>Identification of a novel Sry-related gene and its germ cell-specific expression.</title>
        <authorList>
            <person name="Osaki E."/>
            <person name="Nishina Y."/>
            <person name="Inazawa J."/>
            <person name="Copeland N.G."/>
            <person name="Gilbert D.J."/>
            <person name="Jenkins N.A."/>
            <person name="Ohsugi M."/>
            <person name="Tezuka T."/>
            <person name="Yoshida M."/>
            <person name="Semba K."/>
        </authorList>
    </citation>
    <scope>NUCLEOTIDE SEQUENCE [MRNA] (ISOFORMS 1 AND 2)</scope>
    <scope>SUBCELLULAR LOCATION</scope>
    <scope>FUNCTION</scope>
    <source>
        <tissue>Testis</tissue>
    </source>
</reference>
<reference key="2">
    <citation type="journal article" date="2004" name="Genome Res.">
        <title>The status, quality, and expansion of the NIH full-length cDNA project: the Mammalian Gene Collection (MGC).</title>
        <authorList>
            <consortium name="The MGC Project Team"/>
        </authorList>
    </citation>
    <scope>NUCLEOTIDE SEQUENCE [LARGE SCALE MRNA] (ISOFORM 1)</scope>
    <scope>VARIANT LYS-429</scope>
    <source>
        <tissue>Brain</tissue>
    </source>
</reference>
<reference key="3">
    <citation type="journal article" date="2018" name="EBioMedicine">
        <title>SOX30 Inhibits Tumor Metastasis through Attenuating Wnt-Signaling via Transcriptional and Posttranslational Regulation of beta-Catenin in Lung Cancer.</title>
        <authorList>
            <person name="Han F."/>
            <person name="Liu W.B."/>
            <person name="Shi X.Y."/>
            <person name="Yang J.T."/>
            <person name="Zhang X."/>
            <person name="Li Z.M."/>
            <person name="Jiang X."/>
            <person name="Yin L."/>
            <person name="Li J.J."/>
            <person name="Huang C.S."/>
            <person name="Cao J."/>
            <person name="Liu J.Y."/>
        </authorList>
    </citation>
    <scope>FUNCTION</scope>
    <scope>INTERACTION WITH CTNNB1</scope>
    <scope>SUBCELLULAR LOCATION</scope>
</reference>
<feature type="chain" id="PRO_0000048773" description="Transcription factor SOX-30">
    <location>
        <begin position="1"/>
        <end position="753"/>
    </location>
</feature>
<feature type="DNA-binding region" description="HMG box" evidence="2">
    <location>
        <begin position="337"/>
        <end position="405"/>
    </location>
</feature>
<feature type="region of interest" description="Disordered" evidence="3">
    <location>
        <begin position="1"/>
        <end position="45"/>
    </location>
</feature>
<feature type="region of interest" description="Disordered" evidence="3">
    <location>
        <begin position="137"/>
        <end position="161"/>
    </location>
</feature>
<feature type="region of interest" description="Disordered" evidence="3">
    <location>
        <begin position="514"/>
        <end position="575"/>
    </location>
</feature>
<feature type="region of interest" description="Disordered" evidence="3">
    <location>
        <begin position="726"/>
        <end position="753"/>
    </location>
</feature>
<feature type="compositionally biased region" description="Pro residues" evidence="3">
    <location>
        <begin position="7"/>
        <end position="23"/>
    </location>
</feature>
<feature type="compositionally biased region" description="Polar residues" evidence="3">
    <location>
        <begin position="531"/>
        <end position="563"/>
    </location>
</feature>
<feature type="compositionally biased region" description="Polar residues" evidence="3">
    <location>
        <begin position="726"/>
        <end position="739"/>
    </location>
</feature>
<feature type="splice variant" id="VSP_002205" description="In isoform 2." evidence="7">
    <original>GETSPAIQLPTPAVQSPSPVTLFQPSVSSAAQVAVQDPS</original>
    <variation>VHALTVGLPLAMEIFRVQCQNALVIMKTGTQNMRVSFQL</variation>
    <location>
        <begin position="463"/>
        <end position="501"/>
    </location>
</feature>
<feature type="splice variant" id="VSP_002206" description="In isoform 2." evidence="7">
    <location>
        <begin position="502"/>
        <end position="753"/>
    </location>
</feature>
<feature type="sequence variant" id="VAR_049563" description="In dbSNP:rs12188040." evidence="5">
    <original>Q</original>
    <variation>K</variation>
    <location>
        <position position="429"/>
    </location>
</feature>
<feature type="sequence variant" id="VAR_024485" description="In dbSNP:rs889057.">
    <original>V</original>
    <variation>M</variation>
    <location>
        <position position="749"/>
    </location>
</feature>
<feature type="helix" evidence="8">
    <location>
        <begin position="340"/>
        <end position="358"/>
    </location>
</feature>
<feature type="helix" evidence="8">
    <location>
        <begin position="364"/>
        <end position="377"/>
    </location>
</feature>
<feature type="helix" evidence="8">
    <location>
        <begin position="380"/>
        <end position="398"/>
    </location>
</feature>
<accession>O94993</accession>
<accession>O94995</accession>
<accession>Q8IYX6</accession>
<proteinExistence type="evidence at protein level"/>
<protein>
    <recommendedName>
        <fullName>Transcription factor SOX-30</fullName>
    </recommendedName>
</protein>
<organism>
    <name type="scientific">Homo sapiens</name>
    <name type="common">Human</name>
    <dbReference type="NCBI Taxonomy" id="9606"/>
    <lineage>
        <taxon>Eukaryota</taxon>
        <taxon>Metazoa</taxon>
        <taxon>Chordata</taxon>
        <taxon>Craniata</taxon>
        <taxon>Vertebrata</taxon>
        <taxon>Euteleostomi</taxon>
        <taxon>Mammalia</taxon>
        <taxon>Eutheria</taxon>
        <taxon>Euarchontoglires</taxon>
        <taxon>Primates</taxon>
        <taxon>Haplorrhini</taxon>
        <taxon>Catarrhini</taxon>
        <taxon>Hominidae</taxon>
        <taxon>Homo</taxon>
    </lineage>
</organism>
<sequence length="753" mass="81854">MERARPEPPPQPRPLRPAPPPLPVEGTSFWAAAMEPPPSSPTLSAAASATLASSCGEAVASGLQPAVRRLLQVKPEQVLLLPQPQAQNEEAAASSAQARLLQFRPDLRLLQPPTASDGATSRPELHPVQPLALHVKAKKQKLGPSLDQSVGPRGAVETGPRASRVVKLEGPGPALGYFRGDEKGKLEAEEVMRDSMQGGAGKSPAAIREGVIKTEEPERLLEDCRLGAEPASNGLVHGSAEVILAPTSGAFGPHQQDLRIPLTLHTVPPGARIQFQGAPPSELIRLTKVPLTPVPTKMQSLLEPSVKIETKDVPLTVLPSDAGIPDTPFSKDRNGHVKRPMNAFMVWARIHRPALAKANPAANNAEISVQLGLEWNKLSEEQKKPYYDEAQKIKEKHREEFPGWVYQPRPGKRKRFPLSVSNVFSGTTQNIISTNPTTVYPYRSPTYSVVIPSLQNPITHPVGETSPAIQLPTPAVQSPSPVTLFQPSVSSAAQVAVQDPSLPVYPALPPQRFTGPSQTDTHQLHSEATHTVKQPTPVSLESANRISSSASTAHARFATSTIQPPREYSSVSPCPRSAPIPQASPIPHPHVYQPPPLGHPATLFGTPPRFSFHHPYFLPGPHYFPSSTCPYSRPPFGYGNFPSSMPECLSYYEDRYPKHEGIFSTLNRDYSFRDYSSECTHSENSRSCENMNGTSYYNSHSHSGEENLNPVPQLDIGTLENVFTAPTSTPSSIQQVNVTDSDEEEEEKVLRDL</sequence>
<dbReference type="EMBL" id="AB022083">
    <property type="protein sequence ID" value="BAA37146.1"/>
    <property type="molecule type" value="mRNA"/>
</dbReference>
<dbReference type="EMBL" id="AB022441">
    <property type="protein sequence ID" value="BAA37149.1"/>
    <property type="molecule type" value="mRNA"/>
</dbReference>
<dbReference type="EMBL" id="BC033492">
    <property type="protein sequence ID" value="AAH33492.2"/>
    <property type="molecule type" value="mRNA"/>
</dbReference>
<dbReference type="CCDS" id="CCDS4339.1">
    <molecule id="O94993-1"/>
</dbReference>
<dbReference type="CCDS" id="CCDS4340.1">
    <molecule id="O94993-2"/>
</dbReference>
<dbReference type="RefSeq" id="NP_001295094.1">
    <property type="nucleotide sequence ID" value="NM_001308165.1"/>
</dbReference>
<dbReference type="RefSeq" id="NP_008948.1">
    <molecule id="O94993-2"/>
    <property type="nucleotide sequence ID" value="NM_007017.3"/>
</dbReference>
<dbReference type="RefSeq" id="NP_848511.1">
    <molecule id="O94993-1"/>
    <property type="nucleotide sequence ID" value="NM_178424.2"/>
</dbReference>
<dbReference type="PDB" id="7JJK">
    <property type="method" value="X-ray"/>
    <property type="resolution" value="1.40 A"/>
    <property type="chains" value="A=335-423"/>
</dbReference>
<dbReference type="PDBsum" id="7JJK"/>
<dbReference type="SMR" id="O94993"/>
<dbReference type="BioGRID" id="116247">
    <property type="interactions" value="19"/>
</dbReference>
<dbReference type="FunCoup" id="O94993">
    <property type="interactions" value="783"/>
</dbReference>
<dbReference type="IntAct" id="O94993">
    <property type="interactions" value="15"/>
</dbReference>
<dbReference type="MINT" id="O94993"/>
<dbReference type="STRING" id="9606.ENSP00000265007"/>
<dbReference type="GlyGen" id="O94993">
    <property type="glycosylation" value="2 sites, 1 O-linked glycan (1 site)"/>
</dbReference>
<dbReference type="iPTMnet" id="O94993"/>
<dbReference type="PhosphoSitePlus" id="O94993"/>
<dbReference type="BioMuta" id="SOX30"/>
<dbReference type="jPOST" id="O94993"/>
<dbReference type="MassIVE" id="O94993"/>
<dbReference type="PaxDb" id="9606-ENSP00000265007"/>
<dbReference type="PeptideAtlas" id="O94993"/>
<dbReference type="ProteomicsDB" id="50621">
    <molecule id="O94993-1"/>
</dbReference>
<dbReference type="ProteomicsDB" id="50622">
    <molecule id="O94993-2"/>
</dbReference>
<dbReference type="Antibodypedia" id="1746">
    <property type="antibodies" value="217 antibodies from 29 providers"/>
</dbReference>
<dbReference type="DNASU" id="11063"/>
<dbReference type="Ensembl" id="ENST00000265007.11">
    <molecule id="O94993-1"/>
    <property type="protein sequence ID" value="ENSP00000265007.6"/>
    <property type="gene ID" value="ENSG00000039600.11"/>
</dbReference>
<dbReference type="Ensembl" id="ENST00000311371.9">
    <molecule id="O94993-2"/>
    <property type="protein sequence ID" value="ENSP00000309343.5"/>
    <property type="gene ID" value="ENSG00000039600.11"/>
</dbReference>
<dbReference type="GeneID" id="11063"/>
<dbReference type="KEGG" id="hsa:11063"/>
<dbReference type="MANE-Select" id="ENST00000265007.11">
    <property type="protein sequence ID" value="ENSP00000265007.6"/>
    <property type="RefSeq nucleotide sequence ID" value="NM_178424.2"/>
    <property type="RefSeq protein sequence ID" value="NP_848511.1"/>
</dbReference>
<dbReference type="UCSC" id="uc003lxb.1">
    <molecule id="O94993-1"/>
    <property type="organism name" value="human"/>
</dbReference>
<dbReference type="AGR" id="HGNC:30635"/>
<dbReference type="CTD" id="11063"/>
<dbReference type="DisGeNET" id="11063"/>
<dbReference type="GeneCards" id="SOX30"/>
<dbReference type="HGNC" id="HGNC:30635">
    <property type="gene designation" value="SOX30"/>
</dbReference>
<dbReference type="HPA" id="ENSG00000039600">
    <property type="expression patterns" value="Tissue enriched (testis)"/>
</dbReference>
<dbReference type="MIM" id="606698">
    <property type="type" value="gene"/>
</dbReference>
<dbReference type="neXtProt" id="NX_O94993"/>
<dbReference type="OpenTargets" id="ENSG00000039600"/>
<dbReference type="PharmGKB" id="PA134876614"/>
<dbReference type="VEuPathDB" id="HostDB:ENSG00000039600"/>
<dbReference type="eggNOG" id="KOG0527">
    <property type="taxonomic scope" value="Eukaryota"/>
</dbReference>
<dbReference type="GeneTree" id="ENSGT00940000161042"/>
<dbReference type="HOGENOM" id="CLU_543964_0_0_1"/>
<dbReference type="InParanoid" id="O94993"/>
<dbReference type="OMA" id="FIPSPAY"/>
<dbReference type="OrthoDB" id="6247875at2759"/>
<dbReference type="PAN-GO" id="O94993">
    <property type="GO annotations" value="4 GO annotations based on evolutionary models"/>
</dbReference>
<dbReference type="PhylomeDB" id="O94993"/>
<dbReference type="TreeFam" id="TF336594"/>
<dbReference type="PathwayCommons" id="O94993"/>
<dbReference type="SignaLink" id="O94993"/>
<dbReference type="BioGRID-ORCS" id="11063">
    <property type="hits" value="21 hits in 1166 CRISPR screens"/>
</dbReference>
<dbReference type="ChiTaRS" id="SOX30">
    <property type="organism name" value="human"/>
</dbReference>
<dbReference type="GenomeRNAi" id="11063"/>
<dbReference type="Pharos" id="O94993">
    <property type="development level" value="Tbio"/>
</dbReference>
<dbReference type="PRO" id="PR:O94993"/>
<dbReference type="Proteomes" id="UP000005640">
    <property type="component" value="Chromosome 5"/>
</dbReference>
<dbReference type="RNAct" id="O94993">
    <property type="molecule type" value="protein"/>
</dbReference>
<dbReference type="Bgee" id="ENSG00000039600">
    <property type="expression patterns" value="Expressed in left testis and 89 other cell types or tissues"/>
</dbReference>
<dbReference type="ExpressionAtlas" id="O94993">
    <property type="expression patterns" value="baseline and differential"/>
</dbReference>
<dbReference type="GO" id="GO:0000785">
    <property type="term" value="C:chromatin"/>
    <property type="evidence" value="ECO:0000247"/>
    <property type="project" value="NTNU_SB"/>
</dbReference>
<dbReference type="GO" id="GO:0010369">
    <property type="term" value="C:chromocenter"/>
    <property type="evidence" value="ECO:0000250"/>
    <property type="project" value="UniProtKB"/>
</dbReference>
<dbReference type="GO" id="GO:0005737">
    <property type="term" value="C:cytoplasm"/>
    <property type="evidence" value="ECO:0000314"/>
    <property type="project" value="UniProtKB"/>
</dbReference>
<dbReference type="GO" id="GO:0005829">
    <property type="term" value="C:cytosol"/>
    <property type="evidence" value="ECO:0000314"/>
    <property type="project" value="HPA"/>
</dbReference>
<dbReference type="GO" id="GO:0043231">
    <property type="term" value="C:intracellular membrane-bounded organelle"/>
    <property type="evidence" value="ECO:0000314"/>
    <property type="project" value="HPA"/>
</dbReference>
<dbReference type="GO" id="GO:0005654">
    <property type="term" value="C:nucleoplasm"/>
    <property type="evidence" value="ECO:0000314"/>
    <property type="project" value="HPA"/>
</dbReference>
<dbReference type="GO" id="GO:0005634">
    <property type="term" value="C:nucleus"/>
    <property type="evidence" value="ECO:0000314"/>
    <property type="project" value="UniProtKB"/>
</dbReference>
<dbReference type="GO" id="GO:0008013">
    <property type="term" value="F:beta-catenin binding"/>
    <property type="evidence" value="ECO:0000353"/>
    <property type="project" value="UniProtKB"/>
</dbReference>
<dbReference type="GO" id="GO:0001228">
    <property type="term" value="F:DNA-binding transcription activator activity, RNA polymerase II-specific"/>
    <property type="evidence" value="ECO:0000314"/>
    <property type="project" value="GO_Central"/>
</dbReference>
<dbReference type="GO" id="GO:0000981">
    <property type="term" value="F:DNA-binding transcription factor activity, RNA polymerase II-specific"/>
    <property type="evidence" value="ECO:0000247"/>
    <property type="project" value="NTNU_SB"/>
</dbReference>
<dbReference type="GO" id="GO:0001227">
    <property type="term" value="F:DNA-binding transcription repressor activity, RNA polymerase II-specific"/>
    <property type="evidence" value="ECO:0000250"/>
    <property type="project" value="UniProtKB"/>
</dbReference>
<dbReference type="GO" id="GO:0000978">
    <property type="term" value="F:RNA polymerase II cis-regulatory region sequence-specific DNA binding"/>
    <property type="evidence" value="ECO:0000314"/>
    <property type="project" value="GO_Central"/>
</dbReference>
<dbReference type="GO" id="GO:1990837">
    <property type="term" value="F:sequence-specific double-stranded DNA binding"/>
    <property type="evidence" value="ECO:0000314"/>
    <property type="project" value="ARUK-UCL"/>
</dbReference>
<dbReference type="GO" id="GO:0000122">
    <property type="term" value="P:negative regulation of transcription by RNA polymerase II"/>
    <property type="evidence" value="ECO:0000250"/>
    <property type="project" value="UniProtKB"/>
</dbReference>
<dbReference type="GO" id="GO:0030178">
    <property type="term" value="P:negative regulation of Wnt signaling pathway"/>
    <property type="evidence" value="ECO:0000315"/>
    <property type="project" value="UniProtKB"/>
</dbReference>
<dbReference type="GO" id="GO:0045944">
    <property type="term" value="P:positive regulation of transcription by RNA polymerase II"/>
    <property type="evidence" value="ECO:0000250"/>
    <property type="project" value="UniProtKB"/>
</dbReference>
<dbReference type="GO" id="GO:0120211">
    <property type="term" value="P:proacrosomal vesicle fusion"/>
    <property type="evidence" value="ECO:0000250"/>
    <property type="project" value="UniProtKB"/>
</dbReference>
<dbReference type="GO" id="GO:0006357">
    <property type="term" value="P:regulation of transcription by RNA polymerase II"/>
    <property type="evidence" value="ECO:0000314"/>
    <property type="project" value="GO_Central"/>
</dbReference>
<dbReference type="GO" id="GO:0031960">
    <property type="term" value="P:response to corticosteroid"/>
    <property type="evidence" value="ECO:0000270"/>
    <property type="project" value="UniProtKB"/>
</dbReference>
<dbReference type="GO" id="GO:0007286">
    <property type="term" value="P:spermatid development"/>
    <property type="evidence" value="ECO:0000250"/>
    <property type="project" value="UniProtKB"/>
</dbReference>
<dbReference type="CDD" id="cd22033">
    <property type="entry name" value="HMG-box_SoxH_SOX30"/>
    <property type="match status" value="1"/>
</dbReference>
<dbReference type="FunFam" id="1.10.30.10:FF:000027">
    <property type="entry name" value="Transcription factor SOX-30"/>
    <property type="match status" value="1"/>
</dbReference>
<dbReference type="Gene3D" id="1.10.30.10">
    <property type="entry name" value="High mobility group box domain"/>
    <property type="match status" value="1"/>
</dbReference>
<dbReference type="InterPro" id="IPR009071">
    <property type="entry name" value="HMG_box_dom"/>
</dbReference>
<dbReference type="InterPro" id="IPR036910">
    <property type="entry name" value="HMG_box_dom_sf"/>
</dbReference>
<dbReference type="InterPro" id="IPR052856">
    <property type="entry name" value="SOX30_TF"/>
</dbReference>
<dbReference type="PANTHER" id="PTHR47279">
    <property type="entry name" value="TRANSCRIPTION FACTOR SOX-30"/>
    <property type="match status" value="1"/>
</dbReference>
<dbReference type="PANTHER" id="PTHR47279:SF1">
    <property type="entry name" value="TRANSCRIPTION FACTOR SOX-30"/>
    <property type="match status" value="1"/>
</dbReference>
<dbReference type="Pfam" id="PF00505">
    <property type="entry name" value="HMG_box"/>
    <property type="match status" value="1"/>
</dbReference>
<dbReference type="SMART" id="SM00398">
    <property type="entry name" value="HMG"/>
    <property type="match status" value="1"/>
</dbReference>
<dbReference type="SUPFAM" id="SSF47095">
    <property type="entry name" value="HMG-box"/>
    <property type="match status" value="1"/>
</dbReference>
<dbReference type="PROSITE" id="PS50118">
    <property type="entry name" value="HMG_BOX_2"/>
    <property type="match status" value="1"/>
</dbReference>
<gene>
    <name type="primary">SOX30</name>
</gene>